<evidence type="ECO:0000255" key="1">
    <source>
        <dbReference type="HAMAP-Rule" id="MF_00227"/>
    </source>
</evidence>
<protein>
    <recommendedName>
        <fullName evidence="1">Ribonuclease P protein component</fullName>
        <shortName evidence="1">RNase P protein</shortName>
        <shortName evidence="1">RNaseP protein</shortName>
        <ecNumber evidence="1">3.1.26.5</ecNumber>
    </recommendedName>
    <alternativeName>
        <fullName evidence="1">Protein C5</fullName>
    </alternativeName>
</protein>
<name>RNPA_STRPD</name>
<organism>
    <name type="scientific">Streptococcus pyogenes serotype M2 (strain MGAS10270)</name>
    <dbReference type="NCBI Taxonomy" id="370552"/>
    <lineage>
        <taxon>Bacteria</taxon>
        <taxon>Bacillati</taxon>
        <taxon>Bacillota</taxon>
        <taxon>Bacilli</taxon>
        <taxon>Lactobacillales</taxon>
        <taxon>Streptococcaceae</taxon>
        <taxon>Streptococcus</taxon>
    </lineage>
</organism>
<dbReference type="EC" id="3.1.26.5" evidence="1"/>
<dbReference type="EMBL" id="CP000260">
    <property type="protein sequence ID" value="ABF33272.1"/>
    <property type="molecule type" value="Genomic_DNA"/>
</dbReference>
<dbReference type="RefSeq" id="WP_002992035.1">
    <property type="nucleotide sequence ID" value="NZ_CVUH01000002.1"/>
</dbReference>
<dbReference type="SMR" id="Q1JIQ1"/>
<dbReference type="GeneID" id="69900175"/>
<dbReference type="KEGG" id="sph:MGAS10270_Spy0207"/>
<dbReference type="HOGENOM" id="CLU_117179_9_1_9"/>
<dbReference type="Proteomes" id="UP000002436">
    <property type="component" value="Chromosome"/>
</dbReference>
<dbReference type="GO" id="GO:0030677">
    <property type="term" value="C:ribonuclease P complex"/>
    <property type="evidence" value="ECO:0007669"/>
    <property type="project" value="TreeGrafter"/>
</dbReference>
<dbReference type="GO" id="GO:0042781">
    <property type="term" value="F:3'-tRNA processing endoribonuclease activity"/>
    <property type="evidence" value="ECO:0007669"/>
    <property type="project" value="TreeGrafter"/>
</dbReference>
<dbReference type="GO" id="GO:0004526">
    <property type="term" value="F:ribonuclease P activity"/>
    <property type="evidence" value="ECO:0007669"/>
    <property type="project" value="UniProtKB-UniRule"/>
</dbReference>
<dbReference type="GO" id="GO:0000049">
    <property type="term" value="F:tRNA binding"/>
    <property type="evidence" value="ECO:0007669"/>
    <property type="project" value="UniProtKB-UniRule"/>
</dbReference>
<dbReference type="GO" id="GO:0001682">
    <property type="term" value="P:tRNA 5'-leader removal"/>
    <property type="evidence" value="ECO:0007669"/>
    <property type="project" value="UniProtKB-UniRule"/>
</dbReference>
<dbReference type="FunFam" id="3.30.230.10:FF:000021">
    <property type="entry name" value="Ribonuclease P protein component"/>
    <property type="match status" value="1"/>
</dbReference>
<dbReference type="Gene3D" id="3.30.230.10">
    <property type="match status" value="1"/>
</dbReference>
<dbReference type="HAMAP" id="MF_00227">
    <property type="entry name" value="RNase_P"/>
    <property type="match status" value="1"/>
</dbReference>
<dbReference type="InterPro" id="IPR020568">
    <property type="entry name" value="Ribosomal_Su5_D2-typ_SF"/>
</dbReference>
<dbReference type="InterPro" id="IPR014721">
    <property type="entry name" value="Ribsml_uS5_D2-typ_fold_subgr"/>
</dbReference>
<dbReference type="InterPro" id="IPR000100">
    <property type="entry name" value="RNase_P"/>
</dbReference>
<dbReference type="InterPro" id="IPR020539">
    <property type="entry name" value="RNase_P_CS"/>
</dbReference>
<dbReference type="NCBIfam" id="TIGR00188">
    <property type="entry name" value="rnpA"/>
    <property type="match status" value="1"/>
</dbReference>
<dbReference type="PANTHER" id="PTHR33992">
    <property type="entry name" value="RIBONUCLEASE P PROTEIN COMPONENT"/>
    <property type="match status" value="1"/>
</dbReference>
<dbReference type="PANTHER" id="PTHR33992:SF1">
    <property type="entry name" value="RIBONUCLEASE P PROTEIN COMPONENT"/>
    <property type="match status" value="1"/>
</dbReference>
<dbReference type="Pfam" id="PF00825">
    <property type="entry name" value="Ribonuclease_P"/>
    <property type="match status" value="1"/>
</dbReference>
<dbReference type="SUPFAM" id="SSF54211">
    <property type="entry name" value="Ribosomal protein S5 domain 2-like"/>
    <property type="match status" value="1"/>
</dbReference>
<dbReference type="PROSITE" id="PS00648">
    <property type="entry name" value="RIBONUCLEASE_P"/>
    <property type="match status" value="1"/>
</dbReference>
<accession>Q1JIQ1</accession>
<reference key="1">
    <citation type="journal article" date="2006" name="Proc. Natl. Acad. Sci. U.S.A.">
        <title>Molecular genetic anatomy of inter- and intraserotype variation in the human bacterial pathogen group A Streptococcus.</title>
        <authorList>
            <person name="Beres S.B."/>
            <person name="Richter E.W."/>
            <person name="Nagiec M.J."/>
            <person name="Sumby P."/>
            <person name="Porcella S.F."/>
            <person name="DeLeo F.R."/>
            <person name="Musser J.M."/>
        </authorList>
    </citation>
    <scope>NUCLEOTIDE SEQUENCE [LARGE SCALE GENOMIC DNA]</scope>
    <source>
        <strain>MGAS10270</strain>
    </source>
</reference>
<sequence length="119" mass="13866">MKKTYRVKREKDFQAIFKDGKSTANRKFVIYHLNRGQDHFRVGISVGKKIGNAVTRNAVKRKIRHVIMALGHQLKSEDFVVIARKGVESLEYQELQQNLHHVLKLAQLLEKGFESEEKH</sequence>
<keyword id="KW-0255">Endonuclease</keyword>
<keyword id="KW-0378">Hydrolase</keyword>
<keyword id="KW-0540">Nuclease</keyword>
<keyword id="KW-0694">RNA-binding</keyword>
<keyword id="KW-0819">tRNA processing</keyword>
<proteinExistence type="inferred from homology"/>
<comment type="function">
    <text evidence="1">RNaseP catalyzes the removal of the 5'-leader sequence from pre-tRNA to produce the mature 5'-terminus. It can also cleave other RNA substrates such as 4.5S RNA. The protein component plays an auxiliary but essential role in vivo by binding to the 5'-leader sequence and broadening the substrate specificity of the ribozyme.</text>
</comment>
<comment type="catalytic activity">
    <reaction evidence="1">
        <text>Endonucleolytic cleavage of RNA, removing 5'-extranucleotides from tRNA precursor.</text>
        <dbReference type="EC" id="3.1.26.5"/>
    </reaction>
</comment>
<comment type="subunit">
    <text evidence="1">Consists of a catalytic RNA component (M1 or rnpB) and a protein subunit.</text>
</comment>
<comment type="similarity">
    <text evidence="1">Belongs to the RnpA family.</text>
</comment>
<gene>
    <name evidence="1" type="primary">rnpA</name>
    <name type="ordered locus">MGAS10270_Spy0207</name>
</gene>
<feature type="chain" id="PRO_1000021478" description="Ribonuclease P protein component">
    <location>
        <begin position="1"/>
        <end position="119"/>
    </location>
</feature>